<evidence type="ECO:0000255" key="1">
    <source>
        <dbReference type="HAMAP-Rule" id="MF_01454"/>
    </source>
</evidence>
<evidence type="ECO:0000255" key="2">
    <source>
        <dbReference type="PROSITE-ProRule" id="PRU01231"/>
    </source>
</evidence>
<evidence type="ECO:0000256" key="3">
    <source>
        <dbReference type="SAM" id="MobiDB-lite"/>
    </source>
</evidence>
<dbReference type="EC" id="3.6.5.-" evidence="1"/>
<dbReference type="EMBL" id="AE005674">
    <property type="protein sequence ID" value="AAN44689.1"/>
    <property type="molecule type" value="Genomic_DNA"/>
</dbReference>
<dbReference type="EMBL" id="AE014073">
    <property type="protein sequence ID" value="AAP18503.1"/>
    <property type="molecule type" value="Genomic_DNA"/>
</dbReference>
<dbReference type="SMR" id="Q83Q14"/>
<dbReference type="STRING" id="198214.SF3223"/>
<dbReference type="PaxDb" id="198214-SF3223"/>
<dbReference type="KEGG" id="sfl:SF3223"/>
<dbReference type="KEGG" id="sfx:S3441"/>
<dbReference type="PATRIC" id="fig|198214.7.peg.3824"/>
<dbReference type="HOGENOM" id="CLU_011747_2_0_6"/>
<dbReference type="Proteomes" id="UP000001006">
    <property type="component" value="Chromosome"/>
</dbReference>
<dbReference type="Proteomes" id="UP000002673">
    <property type="component" value="Chromosome"/>
</dbReference>
<dbReference type="GO" id="GO:0005737">
    <property type="term" value="C:cytoplasm"/>
    <property type="evidence" value="ECO:0007669"/>
    <property type="project" value="UniProtKB-SubCell"/>
</dbReference>
<dbReference type="GO" id="GO:0005525">
    <property type="term" value="F:GTP binding"/>
    <property type="evidence" value="ECO:0007669"/>
    <property type="project" value="UniProtKB-UniRule"/>
</dbReference>
<dbReference type="GO" id="GO:0003924">
    <property type="term" value="F:GTPase activity"/>
    <property type="evidence" value="ECO:0007669"/>
    <property type="project" value="UniProtKB-UniRule"/>
</dbReference>
<dbReference type="GO" id="GO:0000287">
    <property type="term" value="F:magnesium ion binding"/>
    <property type="evidence" value="ECO:0007669"/>
    <property type="project" value="InterPro"/>
</dbReference>
<dbReference type="GO" id="GO:0042254">
    <property type="term" value="P:ribosome biogenesis"/>
    <property type="evidence" value="ECO:0007669"/>
    <property type="project" value="UniProtKB-UniRule"/>
</dbReference>
<dbReference type="CDD" id="cd01898">
    <property type="entry name" value="Obg"/>
    <property type="match status" value="1"/>
</dbReference>
<dbReference type="FunFam" id="2.70.210.12:FF:000001">
    <property type="entry name" value="GTPase Obg"/>
    <property type="match status" value="1"/>
</dbReference>
<dbReference type="FunFam" id="3.40.50.300:FF:000185">
    <property type="entry name" value="GTPase Obg"/>
    <property type="match status" value="1"/>
</dbReference>
<dbReference type="Gene3D" id="2.70.210.12">
    <property type="entry name" value="GTP1/OBG domain"/>
    <property type="match status" value="1"/>
</dbReference>
<dbReference type="Gene3D" id="3.40.50.300">
    <property type="entry name" value="P-loop containing nucleotide triphosphate hydrolases"/>
    <property type="match status" value="1"/>
</dbReference>
<dbReference type="HAMAP" id="MF_01454">
    <property type="entry name" value="GTPase_Obg"/>
    <property type="match status" value="1"/>
</dbReference>
<dbReference type="InterPro" id="IPR031167">
    <property type="entry name" value="G_OBG"/>
</dbReference>
<dbReference type="InterPro" id="IPR006073">
    <property type="entry name" value="GTP-bd"/>
</dbReference>
<dbReference type="InterPro" id="IPR014100">
    <property type="entry name" value="GTP-bd_Obg/CgtA"/>
</dbReference>
<dbReference type="InterPro" id="IPR006074">
    <property type="entry name" value="GTP1-OBG_CS"/>
</dbReference>
<dbReference type="InterPro" id="IPR006169">
    <property type="entry name" value="GTP1_OBG_dom"/>
</dbReference>
<dbReference type="InterPro" id="IPR036726">
    <property type="entry name" value="GTP1_OBG_dom_sf"/>
</dbReference>
<dbReference type="InterPro" id="IPR045086">
    <property type="entry name" value="OBG_GTPase"/>
</dbReference>
<dbReference type="InterPro" id="IPR027417">
    <property type="entry name" value="P-loop_NTPase"/>
</dbReference>
<dbReference type="NCBIfam" id="TIGR02729">
    <property type="entry name" value="Obg_CgtA"/>
    <property type="match status" value="1"/>
</dbReference>
<dbReference type="NCBIfam" id="NF008955">
    <property type="entry name" value="PRK12297.1"/>
    <property type="match status" value="1"/>
</dbReference>
<dbReference type="NCBIfam" id="NF008956">
    <property type="entry name" value="PRK12299.1"/>
    <property type="match status" value="1"/>
</dbReference>
<dbReference type="PANTHER" id="PTHR11702">
    <property type="entry name" value="DEVELOPMENTALLY REGULATED GTP-BINDING PROTEIN-RELATED"/>
    <property type="match status" value="1"/>
</dbReference>
<dbReference type="PANTHER" id="PTHR11702:SF31">
    <property type="entry name" value="MITOCHONDRIAL RIBOSOME-ASSOCIATED GTPASE 2"/>
    <property type="match status" value="1"/>
</dbReference>
<dbReference type="Pfam" id="PF01018">
    <property type="entry name" value="GTP1_OBG"/>
    <property type="match status" value="1"/>
</dbReference>
<dbReference type="Pfam" id="PF01926">
    <property type="entry name" value="MMR_HSR1"/>
    <property type="match status" value="1"/>
</dbReference>
<dbReference type="PIRSF" id="PIRSF002401">
    <property type="entry name" value="GTP_bd_Obg/CgtA"/>
    <property type="match status" value="1"/>
</dbReference>
<dbReference type="PRINTS" id="PR00326">
    <property type="entry name" value="GTP1OBG"/>
</dbReference>
<dbReference type="SUPFAM" id="SSF82051">
    <property type="entry name" value="Obg GTP-binding protein N-terminal domain"/>
    <property type="match status" value="1"/>
</dbReference>
<dbReference type="SUPFAM" id="SSF52540">
    <property type="entry name" value="P-loop containing nucleoside triphosphate hydrolases"/>
    <property type="match status" value="1"/>
</dbReference>
<dbReference type="PROSITE" id="PS51710">
    <property type="entry name" value="G_OBG"/>
    <property type="match status" value="1"/>
</dbReference>
<dbReference type="PROSITE" id="PS00905">
    <property type="entry name" value="GTP1_OBG"/>
    <property type="match status" value="1"/>
</dbReference>
<dbReference type="PROSITE" id="PS51883">
    <property type="entry name" value="OBG"/>
    <property type="match status" value="1"/>
</dbReference>
<organism>
    <name type="scientific">Shigella flexneri</name>
    <dbReference type="NCBI Taxonomy" id="623"/>
    <lineage>
        <taxon>Bacteria</taxon>
        <taxon>Pseudomonadati</taxon>
        <taxon>Pseudomonadota</taxon>
        <taxon>Gammaproteobacteria</taxon>
        <taxon>Enterobacterales</taxon>
        <taxon>Enterobacteriaceae</taxon>
        <taxon>Shigella</taxon>
    </lineage>
</organism>
<keyword id="KW-0963">Cytoplasm</keyword>
<keyword id="KW-0342">GTP-binding</keyword>
<keyword id="KW-0378">Hydrolase</keyword>
<keyword id="KW-0460">Magnesium</keyword>
<keyword id="KW-0479">Metal-binding</keyword>
<keyword id="KW-0547">Nucleotide-binding</keyword>
<keyword id="KW-1185">Reference proteome</keyword>
<comment type="function">
    <text evidence="1">An essential GTPase which binds GTP, GDP and possibly (p)ppGpp with moderate affinity, with high nucleotide exchange rates and a fairly low GTP hydrolysis rate. Plays a role in control of the cell cycle, stress response, ribosome biogenesis and in those bacteria that undergo differentiation, in morphogenesis control.</text>
</comment>
<comment type="cofactor">
    <cofactor evidence="1">
        <name>Mg(2+)</name>
        <dbReference type="ChEBI" id="CHEBI:18420"/>
    </cofactor>
</comment>
<comment type="subunit">
    <text evidence="1">Monomer.</text>
</comment>
<comment type="subcellular location">
    <subcellularLocation>
        <location evidence="1">Cytoplasm</location>
    </subcellularLocation>
</comment>
<comment type="similarity">
    <text evidence="1">Belongs to the TRAFAC class OBG-HflX-like GTPase superfamily. OBG GTPase family.</text>
</comment>
<protein>
    <recommendedName>
        <fullName evidence="1">GTPase Obg</fullName>
        <ecNumber evidence="1">3.6.5.-</ecNumber>
    </recommendedName>
    <alternativeName>
        <fullName evidence="1">GTP-binding protein Obg</fullName>
    </alternativeName>
</protein>
<feature type="chain" id="PRO_0000386257" description="GTPase Obg">
    <location>
        <begin position="1"/>
        <end position="390"/>
    </location>
</feature>
<feature type="domain" description="Obg" evidence="2">
    <location>
        <begin position="1"/>
        <end position="159"/>
    </location>
</feature>
<feature type="domain" description="OBG-type G" evidence="1">
    <location>
        <begin position="160"/>
        <end position="333"/>
    </location>
</feature>
<feature type="region of interest" description="Disordered" evidence="3">
    <location>
        <begin position="127"/>
        <end position="147"/>
    </location>
</feature>
<feature type="compositionally biased region" description="Polar residues" evidence="3">
    <location>
        <begin position="129"/>
        <end position="145"/>
    </location>
</feature>
<feature type="binding site" evidence="1">
    <location>
        <begin position="166"/>
        <end position="173"/>
    </location>
    <ligand>
        <name>GTP</name>
        <dbReference type="ChEBI" id="CHEBI:37565"/>
    </ligand>
</feature>
<feature type="binding site" evidence="1">
    <location>
        <position position="173"/>
    </location>
    <ligand>
        <name>Mg(2+)</name>
        <dbReference type="ChEBI" id="CHEBI:18420"/>
    </ligand>
</feature>
<feature type="binding site" evidence="1">
    <location>
        <begin position="191"/>
        <end position="195"/>
    </location>
    <ligand>
        <name>GTP</name>
        <dbReference type="ChEBI" id="CHEBI:37565"/>
    </ligand>
</feature>
<feature type="binding site" evidence="1">
    <location>
        <position position="193"/>
    </location>
    <ligand>
        <name>Mg(2+)</name>
        <dbReference type="ChEBI" id="CHEBI:18420"/>
    </ligand>
</feature>
<feature type="binding site" evidence="1">
    <location>
        <begin position="213"/>
        <end position="216"/>
    </location>
    <ligand>
        <name>GTP</name>
        <dbReference type="ChEBI" id="CHEBI:37565"/>
    </ligand>
</feature>
<feature type="binding site" evidence="1">
    <location>
        <begin position="283"/>
        <end position="286"/>
    </location>
    <ligand>
        <name>GTP</name>
        <dbReference type="ChEBI" id="CHEBI:37565"/>
    </ligand>
</feature>
<feature type="binding site" evidence="1">
    <location>
        <begin position="314"/>
        <end position="316"/>
    </location>
    <ligand>
        <name>GTP</name>
        <dbReference type="ChEBI" id="CHEBI:37565"/>
    </ligand>
</feature>
<sequence length="390" mass="43228">MKFVDEASILVVAGDGGNGCVSFRREKYIPKGGPDGGDGGDGGDVWMEADENLNTLIDYRFEKSFRAERGQNGASRDCTGKRGKDVTIKVPVGTRVIDQGTGETMGDMTKHGQRLLVAKGGWHGLGNTRFKSSVNRTPRQKTNGTPGDKRELLLELMLLADVGMLGMPNAGKSTFIRAVSAAKPKVADYPFTTLVPSLGVVRMDNEKSFVVADIPGLIEGAAEGAGLGIRFLKHLERCRVLLHLIDIDPIDGTDPVENARIIISELEKYSQDLAAKPRWLVFNKIDLLDKAEAEEKAKAIAEALGWEDKYYLISAASGLGVKDLCWDVMTFIIENPVVQAEEAKQPEKVEFMWDDYHRQQLEEIAEEDDEDWDDDWDEDDEEGVEFIYKR</sequence>
<accession>Q83Q14</accession>
<accession>Q7BZQ4</accession>
<gene>
    <name evidence="1" type="primary">obg</name>
    <name type="ordered locus">SF3223</name>
    <name type="ordered locus">S3441</name>
</gene>
<reference key="1">
    <citation type="journal article" date="2002" name="Nucleic Acids Res.">
        <title>Genome sequence of Shigella flexneri 2a: insights into pathogenicity through comparison with genomes of Escherichia coli K12 and O157.</title>
        <authorList>
            <person name="Jin Q."/>
            <person name="Yuan Z."/>
            <person name="Xu J."/>
            <person name="Wang Y."/>
            <person name="Shen Y."/>
            <person name="Lu W."/>
            <person name="Wang J."/>
            <person name="Liu H."/>
            <person name="Yang J."/>
            <person name="Yang F."/>
            <person name="Zhang X."/>
            <person name="Zhang J."/>
            <person name="Yang G."/>
            <person name="Wu H."/>
            <person name="Qu D."/>
            <person name="Dong J."/>
            <person name="Sun L."/>
            <person name="Xue Y."/>
            <person name="Zhao A."/>
            <person name="Gao Y."/>
            <person name="Zhu J."/>
            <person name="Kan B."/>
            <person name="Ding K."/>
            <person name="Chen S."/>
            <person name="Cheng H."/>
            <person name="Yao Z."/>
            <person name="He B."/>
            <person name="Chen R."/>
            <person name="Ma D."/>
            <person name="Qiang B."/>
            <person name="Wen Y."/>
            <person name="Hou Y."/>
            <person name="Yu J."/>
        </authorList>
    </citation>
    <scope>NUCLEOTIDE SEQUENCE [LARGE SCALE GENOMIC DNA]</scope>
    <source>
        <strain>301 / Serotype 2a</strain>
    </source>
</reference>
<reference key="2">
    <citation type="journal article" date="2003" name="Infect. Immun.">
        <title>Complete genome sequence and comparative genomics of Shigella flexneri serotype 2a strain 2457T.</title>
        <authorList>
            <person name="Wei J."/>
            <person name="Goldberg M.B."/>
            <person name="Burland V."/>
            <person name="Venkatesan M.M."/>
            <person name="Deng W."/>
            <person name="Fournier G."/>
            <person name="Mayhew G.F."/>
            <person name="Plunkett G. III"/>
            <person name="Rose D.J."/>
            <person name="Darling A."/>
            <person name="Mau B."/>
            <person name="Perna N.T."/>
            <person name="Payne S.M."/>
            <person name="Runyen-Janecky L.J."/>
            <person name="Zhou S."/>
            <person name="Schwartz D.C."/>
            <person name="Blattner F.R."/>
        </authorList>
    </citation>
    <scope>NUCLEOTIDE SEQUENCE [LARGE SCALE GENOMIC DNA]</scope>
    <source>
        <strain>ATCC 700930 / 2457T / Serotype 2a</strain>
    </source>
</reference>
<proteinExistence type="inferred from homology"/>
<name>OBG_SHIFL</name>